<comment type="function">
    <text evidence="1">The glycine cleavage system catalyzes the degradation of glycine. The P protein binds the alpha-amino group of glycine through its pyridoxal phosphate cofactor; CO(2) is released and the remaining methylamine moiety is then transferred to the lipoamide cofactor of the H protein.</text>
</comment>
<comment type="catalytic activity">
    <reaction evidence="1">
        <text>N(6)-[(R)-lipoyl]-L-lysyl-[glycine-cleavage complex H protein] + glycine + H(+) = N(6)-[(R)-S(8)-aminomethyldihydrolipoyl]-L-lysyl-[glycine-cleavage complex H protein] + CO2</text>
        <dbReference type="Rhea" id="RHEA:24304"/>
        <dbReference type="Rhea" id="RHEA-COMP:10494"/>
        <dbReference type="Rhea" id="RHEA-COMP:10495"/>
        <dbReference type="ChEBI" id="CHEBI:15378"/>
        <dbReference type="ChEBI" id="CHEBI:16526"/>
        <dbReference type="ChEBI" id="CHEBI:57305"/>
        <dbReference type="ChEBI" id="CHEBI:83099"/>
        <dbReference type="ChEBI" id="CHEBI:83143"/>
        <dbReference type="EC" id="1.4.4.2"/>
    </reaction>
</comment>
<comment type="cofactor">
    <cofactor evidence="1">
        <name>pyridoxal 5'-phosphate</name>
        <dbReference type="ChEBI" id="CHEBI:597326"/>
    </cofactor>
</comment>
<comment type="subunit">
    <text evidence="1">The glycine cleavage system is composed of four proteins: P, T, L and H.</text>
</comment>
<comment type="similarity">
    <text evidence="1">Belongs to the GcvP family.</text>
</comment>
<sequence length="957" mass="104305">MTQTLSQLENSGAFIERHIGPDAAQQQEMLNAVGAQSLNALTGQIVPKDIQLATPPQVGAPATEYAALAELKAIASRNKRFTSYIGMGYTAVQLPPVILRNMLENPGWYTAYTPYQPEVSQGRLEALLNFQQVTLDLTGLDMASASLLDEATAAAEAMAMAKRVSKLKNANRFFVASDVHPQTLDVVRTRAETFGFEVIVDDAQKVLDHQDVFGVLLQQVGTTGEIHDYTALISELKSRKIVVSVAADIMALVLLTAPGKQGADIVFGSAQRFGVPMGYGGPHAAFFAAKDEYKRSMPGRIIGVSKDAAGNTALRMAMQTREQHIRREKANSNICTSQVLLANIASLYAVYHGPVGLKRIANRIHRLTDILAAGLQQKGLKLRHAHYFDTLCVEVADKAGVLARAEAAEINLRSDILNAVGITLDETTTRENVMQLFSVLLGDNHGLDIDTLDKDVAHDSRSIQPAMLRDDEILTHPVFNRYHSETEMMRYMHSLERKDLALNQAMIPLGSCTMKLNAAAEMIPITWPEFAELHPFCPPEQAEGYQQMIAQLADWLVKLTGYDAVCMQPNSGAQGEYAGLLAIRHYHESRNEGHRDICLIPASAHGTNPASAHMAGMQVVVVACDKNGNIDLADLRAKAEQAGDNLSCIMVTYPSTHGVYEETIREVCEVVHQFGGQVYLDGANMNAQVGITSPGFIGADVSHLNLHKTFCIPHGGGGPGMGPIGVKAHLAPFVPGHSVVQIEGMLTRQGAVSAAPFGSASILPISWMYIRMMGAEGLKKASQVAILNANYIASRLQDAFPVLYTGRDGRVAHECILDIRPLKEETGISELDIAKRLIDYGFHAPTMSFPVAGTLMVEPTESESKVELDRFIDAMLAIRSEIDQVKAGVWPLEDNPLVNAPHIQSELVAEWAHPYSREVAVFPAGVADKYWPTVKRLDDVYGDRNLFCSCVPISEYQ</sequence>
<dbReference type="EC" id="1.4.4.2" evidence="1"/>
<dbReference type="EMBL" id="CU928164">
    <property type="protein sequence ID" value="CAR19436.1"/>
    <property type="molecule type" value="Genomic_DNA"/>
</dbReference>
<dbReference type="RefSeq" id="WP_000195039.1">
    <property type="nucleotide sequence ID" value="NC_011750.1"/>
</dbReference>
<dbReference type="RefSeq" id="YP_002409240.1">
    <property type="nucleotide sequence ID" value="NC_011750.1"/>
</dbReference>
<dbReference type="SMR" id="B7NHW4"/>
<dbReference type="STRING" id="585057.ECIAI39_3318"/>
<dbReference type="KEGG" id="ect:ECIAI39_3318"/>
<dbReference type="PATRIC" id="fig|585057.6.peg.3442"/>
<dbReference type="HOGENOM" id="CLU_004620_1_1_6"/>
<dbReference type="Proteomes" id="UP000000749">
    <property type="component" value="Chromosome"/>
</dbReference>
<dbReference type="GO" id="GO:0005829">
    <property type="term" value="C:cytosol"/>
    <property type="evidence" value="ECO:0007669"/>
    <property type="project" value="TreeGrafter"/>
</dbReference>
<dbReference type="GO" id="GO:0005960">
    <property type="term" value="C:glycine cleavage complex"/>
    <property type="evidence" value="ECO:0007669"/>
    <property type="project" value="TreeGrafter"/>
</dbReference>
<dbReference type="GO" id="GO:0016594">
    <property type="term" value="F:glycine binding"/>
    <property type="evidence" value="ECO:0007669"/>
    <property type="project" value="TreeGrafter"/>
</dbReference>
<dbReference type="GO" id="GO:0004375">
    <property type="term" value="F:glycine dehydrogenase (decarboxylating) activity"/>
    <property type="evidence" value="ECO:0007669"/>
    <property type="project" value="UniProtKB-EC"/>
</dbReference>
<dbReference type="GO" id="GO:0030170">
    <property type="term" value="F:pyridoxal phosphate binding"/>
    <property type="evidence" value="ECO:0007669"/>
    <property type="project" value="TreeGrafter"/>
</dbReference>
<dbReference type="GO" id="GO:0019464">
    <property type="term" value="P:glycine decarboxylation via glycine cleavage system"/>
    <property type="evidence" value="ECO:0007669"/>
    <property type="project" value="UniProtKB-UniRule"/>
</dbReference>
<dbReference type="CDD" id="cd00613">
    <property type="entry name" value="GDC-P"/>
    <property type="match status" value="2"/>
</dbReference>
<dbReference type="FunFam" id="3.40.640.10:FF:000005">
    <property type="entry name" value="Glycine dehydrogenase (decarboxylating), mitochondrial"/>
    <property type="match status" value="1"/>
</dbReference>
<dbReference type="FunFam" id="3.90.1150.10:FF:000007">
    <property type="entry name" value="Glycine dehydrogenase (decarboxylating), mitochondrial"/>
    <property type="match status" value="1"/>
</dbReference>
<dbReference type="FunFam" id="3.40.640.10:FF:000007">
    <property type="entry name" value="glycine dehydrogenase (Decarboxylating), mitochondrial"/>
    <property type="match status" value="1"/>
</dbReference>
<dbReference type="Gene3D" id="3.90.1150.10">
    <property type="entry name" value="Aspartate Aminotransferase, domain 1"/>
    <property type="match status" value="1"/>
</dbReference>
<dbReference type="Gene3D" id="3.40.640.10">
    <property type="entry name" value="Type I PLP-dependent aspartate aminotransferase-like (Major domain)"/>
    <property type="match status" value="2"/>
</dbReference>
<dbReference type="HAMAP" id="MF_00711">
    <property type="entry name" value="GcvP"/>
    <property type="match status" value="1"/>
</dbReference>
<dbReference type="InterPro" id="IPR003437">
    <property type="entry name" value="GcvP"/>
</dbReference>
<dbReference type="InterPro" id="IPR049316">
    <property type="entry name" value="GDC-P_C"/>
</dbReference>
<dbReference type="InterPro" id="IPR049315">
    <property type="entry name" value="GDC-P_N"/>
</dbReference>
<dbReference type="InterPro" id="IPR020581">
    <property type="entry name" value="GDC_P"/>
</dbReference>
<dbReference type="InterPro" id="IPR015424">
    <property type="entry name" value="PyrdxlP-dep_Trfase"/>
</dbReference>
<dbReference type="InterPro" id="IPR015421">
    <property type="entry name" value="PyrdxlP-dep_Trfase_major"/>
</dbReference>
<dbReference type="InterPro" id="IPR015422">
    <property type="entry name" value="PyrdxlP-dep_Trfase_small"/>
</dbReference>
<dbReference type="NCBIfam" id="TIGR00461">
    <property type="entry name" value="gcvP"/>
    <property type="match status" value="1"/>
</dbReference>
<dbReference type="NCBIfam" id="NF003346">
    <property type="entry name" value="PRK04366.1"/>
    <property type="match status" value="1"/>
</dbReference>
<dbReference type="PANTHER" id="PTHR11773:SF13">
    <property type="entry name" value="GLYCINE DEHYDROGENASE (DECARBOXYLATING)"/>
    <property type="match status" value="1"/>
</dbReference>
<dbReference type="PANTHER" id="PTHR11773">
    <property type="entry name" value="GLYCINE DEHYDROGENASE, DECARBOXYLATING"/>
    <property type="match status" value="1"/>
</dbReference>
<dbReference type="Pfam" id="PF21478">
    <property type="entry name" value="GcvP2_C"/>
    <property type="match status" value="1"/>
</dbReference>
<dbReference type="Pfam" id="PF02347">
    <property type="entry name" value="GDC-P"/>
    <property type="match status" value="2"/>
</dbReference>
<dbReference type="SUPFAM" id="SSF53383">
    <property type="entry name" value="PLP-dependent transferases"/>
    <property type="match status" value="2"/>
</dbReference>
<gene>
    <name evidence="1" type="primary">gcvP</name>
    <name type="ordered locus">ECIAI39_3318</name>
</gene>
<proteinExistence type="inferred from homology"/>
<evidence type="ECO:0000255" key="1">
    <source>
        <dbReference type="HAMAP-Rule" id="MF_00711"/>
    </source>
</evidence>
<organism>
    <name type="scientific">Escherichia coli O7:K1 (strain IAI39 / ExPEC)</name>
    <dbReference type="NCBI Taxonomy" id="585057"/>
    <lineage>
        <taxon>Bacteria</taxon>
        <taxon>Pseudomonadati</taxon>
        <taxon>Pseudomonadota</taxon>
        <taxon>Gammaproteobacteria</taxon>
        <taxon>Enterobacterales</taxon>
        <taxon>Enterobacteriaceae</taxon>
        <taxon>Escherichia</taxon>
    </lineage>
</organism>
<accession>B7NHW4</accession>
<feature type="chain" id="PRO_1000132436" description="Glycine dehydrogenase (decarboxylating)">
    <location>
        <begin position="1"/>
        <end position="957"/>
    </location>
</feature>
<feature type="modified residue" description="N6-(pyridoxal phosphate)lysine" evidence="1">
    <location>
        <position position="708"/>
    </location>
</feature>
<protein>
    <recommendedName>
        <fullName evidence="1">Glycine dehydrogenase (decarboxylating)</fullName>
        <ecNumber evidence="1">1.4.4.2</ecNumber>
    </recommendedName>
    <alternativeName>
        <fullName evidence="1">Glycine cleavage system P-protein</fullName>
    </alternativeName>
    <alternativeName>
        <fullName evidence="1">Glycine decarboxylase</fullName>
    </alternativeName>
    <alternativeName>
        <fullName evidence="1">Glycine dehydrogenase (aminomethyl-transferring)</fullName>
    </alternativeName>
</protein>
<reference key="1">
    <citation type="journal article" date="2009" name="PLoS Genet.">
        <title>Organised genome dynamics in the Escherichia coli species results in highly diverse adaptive paths.</title>
        <authorList>
            <person name="Touchon M."/>
            <person name="Hoede C."/>
            <person name="Tenaillon O."/>
            <person name="Barbe V."/>
            <person name="Baeriswyl S."/>
            <person name="Bidet P."/>
            <person name="Bingen E."/>
            <person name="Bonacorsi S."/>
            <person name="Bouchier C."/>
            <person name="Bouvet O."/>
            <person name="Calteau A."/>
            <person name="Chiapello H."/>
            <person name="Clermont O."/>
            <person name="Cruveiller S."/>
            <person name="Danchin A."/>
            <person name="Diard M."/>
            <person name="Dossat C."/>
            <person name="Karoui M.E."/>
            <person name="Frapy E."/>
            <person name="Garry L."/>
            <person name="Ghigo J.M."/>
            <person name="Gilles A.M."/>
            <person name="Johnson J."/>
            <person name="Le Bouguenec C."/>
            <person name="Lescat M."/>
            <person name="Mangenot S."/>
            <person name="Martinez-Jehanne V."/>
            <person name="Matic I."/>
            <person name="Nassif X."/>
            <person name="Oztas S."/>
            <person name="Petit M.A."/>
            <person name="Pichon C."/>
            <person name="Rouy Z."/>
            <person name="Ruf C.S."/>
            <person name="Schneider D."/>
            <person name="Tourret J."/>
            <person name="Vacherie B."/>
            <person name="Vallenet D."/>
            <person name="Medigue C."/>
            <person name="Rocha E.P.C."/>
            <person name="Denamur E."/>
        </authorList>
    </citation>
    <scope>NUCLEOTIDE SEQUENCE [LARGE SCALE GENOMIC DNA]</scope>
    <source>
        <strain>IAI39 / ExPEC</strain>
    </source>
</reference>
<name>GCSP_ECO7I</name>
<keyword id="KW-0560">Oxidoreductase</keyword>
<keyword id="KW-0663">Pyridoxal phosphate</keyword>